<feature type="chain" id="PRO_0000429688" description="Putative transmembrane protein At3g54730">
    <location>
        <begin position="1"/>
        <end position="387"/>
    </location>
</feature>
<feature type="transmembrane region" description="Helical" evidence="1">
    <location>
        <begin position="97"/>
        <end position="117"/>
    </location>
</feature>
<feature type="transmembrane region" description="Helical" evidence="1">
    <location>
        <begin position="128"/>
        <end position="148"/>
    </location>
</feature>
<feature type="transmembrane region" description="Helical" evidence="1">
    <location>
        <begin position="154"/>
        <end position="174"/>
    </location>
</feature>
<feature type="transmembrane region" description="Helical" evidence="1">
    <location>
        <begin position="186"/>
        <end position="206"/>
    </location>
</feature>
<feature type="transmembrane region" description="Helical" evidence="1">
    <location>
        <begin position="221"/>
        <end position="241"/>
    </location>
</feature>
<feature type="transmembrane region" description="Helical" evidence="1">
    <location>
        <begin position="292"/>
        <end position="312"/>
    </location>
</feature>
<feature type="transmembrane region" description="Helical" evidence="1">
    <location>
        <begin position="335"/>
        <end position="355"/>
    </location>
</feature>
<feature type="transmembrane region" description="Helical" evidence="1">
    <location>
        <begin position="362"/>
        <end position="382"/>
    </location>
</feature>
<feature type="region of interest" description="Disordered" evidence="2">
    <location>
        <begin position="10"/>
        <end position="45"/>
    </location>
</feature>
<feature type="compositionally biased region" description="Pro residues" evidence="2">
    <location>
        <begin position="10"/>
        <end position="25"/>
    </location>
</feature>
<feature type="splice variant" id="VSP_055038" description="In isoform 2." evidence="3">
    <location>
        <begin position="129"/>
        <end position="387"/>
    </location>
</feature>
<organism>
    <name type="scientific">Arabidopsis thaliana</name>
    <name type="common">Mouse-ear cress</name>
    <dbReference type="NCBI Taxonomy" id="3702"/>
    <lineage>
        <taxon>Eukaryota</taxon>
        <taxon>Viridiplantae</taxon>
        <taxon>Streptophyta</taxon>
        <taxon>Embryophyta</taxon>
        <taxon>Tracheophyta</taxon>
        <taxon>Spermatophyta</taxon>
        <taxon>Magnoliopsida</taxon>
        <taxon>eudicotyledons</taxon>
        <taxon>Gunneridae</taxon>
        <taxon>Pentapetalae</taxon>
        <taxon>rosids</taxon>
        <taxon>malvids</taxon>
        <taxon>Brassicales</taxon>
        <taxon>Brassicaceae</taxon>
        <taxon>Camelineae</taxon>
        <taxon>Arabidopsis</taxon>
    </lineage>
</organism>
<gene>
    <name type="ordered locus">At3g54730</name>
    <name type="ORF">T5N23.90</name>
</gene>
<proteinExistence type="predicted"/>
<evidence type="ECO:0000255" key="1"/>
<evidence type="ECO:0000256" key="2">
    <source>
        <dbReference type="SAM" id="MobiDB-lite"/>
    </source>
</evidence>
<evidence type="ECO:0000305" key="3"/>
<protein>
    <recommendedName>
        <fullName>Putative transmembrane protein At3g54730</fullName>
    </recommendedName>
</protein>
<name>Y3473_ARATH</name>
<reference key="1">
    <citation type="journal article" date="2000" name="Nature">
        <title>Sequence and analysis of chromosome 3 of the plant Arabidopsis thaliana.</title>
        <authorList>
            <person name="Salanoubat M."/>
            <person name="Lemcke K."/>
            <person name="Rieger M."/>
            <person name="Ansorge W."/>
            <person name="Unseld M."/>
            <person name="Fartmann B."/>
            <person name="Valle G."/>
            <person name="Bloecker H."/>
            <person name="Perez-Alonso M."/>
            <person name="Obermaier B."/>
            <person name="Delseny M."/>
            <person name="Boutry M."/>
            <person name="Grivell L.A."/>
            <person name="Mache R."/>
            <person name="Puigdomenech P."/>
            <person name="De Simone V."/>
            <person name="Choisne N."/>
            <person name="Artiguenave F."/>
            <person name="Robert C."/>
            <person name="Brottier P."/>
            <person name="Wincker P."/>
            <person name="Cattolico L."/>
            <person name="Weissenbach J."/>
            <person name="Saurin W."/>
            <person name="Quetier F."/>
            <person name="Schaefer M."/>
            <person name="Mueller-Auer S."/>
            <person name="Gabel C."/>
            <person name="Fuchs M."/>
            <person name="Benes V."/>
            <person name="Wurmbach E."/>
            <person name="Drzonek H."/>
            <person name="Erfle H."/>
            <person name="Jordan N."/>
            <person name="Bangert S."/>
            <person name="Wiedelmann R."/>
            <person name="Kranz H."/>
            <person name="Voss H."/>
            <person name="Holland R."/>
            <person name="Brandt P."/>
            <person name="Nyakatura G."/>
            <person name="Vezzi A."/>
            <person name="D'Angelo M."/>
            <person name="Pallavicini A."/>
            <person name="Toppo S."/>
            <person name="Simionati B."/>
            <person name="Conrad A."/>
            <person name="Hornischer K."/>
            <person name="Kauer G."/>
            <person name="Loehnert T.-H."/>
            <person name="Nordsiek G."/>
            <person name="Reichelt J."/>
            <person name="Scharfe M."/>
            <person name="Schoen O."/>
            <person name="Bargues M."/>
            <person name="Terol J."/>
            <person name="Climent J."/>
            <person name="Navarro P."/>
            <person name="Collado C."/>
            <person name="Perez-Perez A."/>
            <person name="Ottenwaelder B."/>
            <person name="Duchemin D."/>
            <person name="Cooke R."/>
            <person name="Laudie M."/>
            <person name="Berger-Llauro C."/>
            <person name="Purnelle B."/>
            <person name="Masuy D."/>
            <person name="de Haan M."/>
            <person name="Maarse A.C."/>
            <person name="Alcaraz J.-P."/>
            <person name="Cottet A."/>
            <person name="Casacuberta E."/>
            <person name="Monfort A."/>
            <person name="Argiriou A."/>
            <person name="Flores M."/>
            <person name="Liguori R."/>
            <person name="Vitale D."/>
            <person name="Mannhaupt G."/>
            <person name="Haase D."/>
            <person name="Schoof H."/>
            <person name="Rudd S."/>
            <person name="Zaccaria P."/>
            <person name="Mewes H.-W."/>
            <person name="Mayer K.F.X."/>
            <person name="Kaul S."/>
            <person name="Town C.D."/>
            <person name="Koo H.L."/>
            <person name="Tallon L.J."/>
            <person name="Jenkins J."/>
            <person name="Rooney T."/>
            <person name="Rizzo M."/>
            <person name="Walts A."/>
            <person name="Utterback T."/>
            <person name="Fujii C.Y."/>
            <person name="Shea T.P."/>
            <person name="Creasy T.H."/>
            <person name="Haas B."/>
            <person name="Maiti R."/>
            <person name="Wu D."/>
            <person name="Peterson J."/>
            <person name="Van Aken S."/>
            <person name="Pai G."/>
            <person name="Militscher J."/>
            <person name="Sellers P."/>
            <person name="Gill J.E."/>
            <person name="Feldblyum T.V."/>
            <person name="Preuss D."/>
            <person name="Lin X."/>
            <person name="Nierman W.C."/>
            <person name="Salzberg S.L."/>
            <person name="White O."/>
            <person name="Venter J.C."/>
            <person name="Fraser C.M."/>
            <person name="Kaneko T."/>
            <person name="Nakamura Y."/>
            <person name="Sato S."/>
            <person name="Kato T."/>
            <person name="Asamizu E."/>
            <person name="Sasamoto S."/>
            <person name="Kimura T."/>
            <person name="Idesawa K."/>
            <person name="Kawashima K."/>
            <person name="Kishida Y."/>
            <person name="Kiyokawa C."/>
            <person name="Kohara M."/>
            <person name="Matsumoto M."/>
            <person name="Matsuno A."/>
            <person name="Muraki A."/>
            <person name="Nakayama S."/>
            <person name="Nakazaki N."/>
            <person name="Shinpo S."/>
            <person name="Takeuchi C."/>
            <person name="Wada T."/>
            <person name="Watanabe A."/>
            <person name="Yamada M."/>
            <person name="Yasuda M."/>
            <person name="Tabata S."/>
        </authorList>
    </citation>
    <scope>NUCLEOTIDE SEQUENCE [LARGE SCALE GENOMIC DNA]</scope>
    <source>
        <strain>cv. Columbia</strain>
    </source>
</reference>
<reference key="2">
    <citation type="journal article" date="2017" name="Plant J.">
        <title>Araport11: a complete reannotation of the Arabidopsis thaliana reference genome.</title>
        <authorList>
            <person name="Cheng C.Y."/>
            <person name="Krishnakumar V."/>
            <person name="Chan A.P."/>
            <person name="Thibaud-Nissen F."/>
            <person name="Schobel S."/>
            <person name="Town C.D."/>
        </authorList>
    </citation>
    <scope>GENOME REANNOTATION</scope>
    <source>
        <strain>cv. Columbia</strain>
    </source>
</reference>
<reference key="3">
    <citation type="submission" date="2006-03" db="EMBL/GenBank/DDBJ databases">
        <authorList>
            <person name="Underwood B.A."/>
            <person name="Xiao Y.-L."/>
            <person name="Moskal W.A. Jr."/>
            <person name="Monaghan E.L."/>
            <person name="Wang W."/>
            <person name="Redman J.C."/>
            <person name="Wu H.C."/>
            <person name="Utterback T."/>
            <person name="Town C.D."/>
        </authorList>
    </citation>
    <scope>NUCLEOTIDE SEQUENCE [LARGE SCALE MRNA]</scope>
    <source>
        <strain>cv. Columbia</strain>
    </source>
</reference>
<sequence length="387" mass="44157">MALVMLARAPAPPLLLPSPNPPPCALPQDLTSLVSPSEPPDPPDPPDYLVGASNSFLSILLLRSSDLGSDLVQALSPLDLGFALRSITAVCSSWYQVFPLACLELWFSIPHLSHPLVTLSKGFVSLKGSNFFEFFTFFWNMPSFILQFPHHEDVMISTSFRLVLPQYEAVMILLKLKLFLPHYEDVLFSIGLRIQLLLPQYEVGLILYKLRLLLPHYEDVIQKLWLRAIHVIVSLVWFLEISRRIKEKTYDVLTRNDLGSWTPDLFIEKWWFSQPHTSPKLRFFSHLVGSRSWCFVAYAIVAVFHDAFYPLEDVASPDSRSPSVLSYFRKLISCFSTIGVSNFSCLTVMYVFIFFFRAFRMPFVAVVSLAFVASLMYLLNHFSIVGE</sequence>
<comment type="subcellular location">
    <subcellularLocation>
        <location evidence="3">Membrane</location>
        <topology evidence="3">Multi-pass membrane protein</topology>
    </subcellularLocation>
</comment>
<comment type="alternative products">
    <event type="alternative splicing"/>
    <isoform>
        <id>P0DKG2-1</id>
        <name>1</name>
        <sequence type="displayed"/>
    </isoform>
    <isoform>
        <id>P0DKG2-2</id>
        <name>2</name>
        <sequence type="described" ref="VSP_055038"/>
    </isoform>
</comment>
<keyword id="KW-0025">Alternative splicing</keyword>
<keyword id="KW-0472">Membrane</keyword>
<keyword id="KW-1185">Reference proteome</keyword>
<keyword id="KW-0812">Transmembrane</keyword>
<keyword id="KW-1133">Transmembrane helix</keyword>
<accession>P0DKG2</accession>
<accession>F4JE11</accession>
<accession>Q9M1S7</accession>
<dbReference type="EMBL" id="AL138650">
    <property type="protein sequence ID" value="CAB77593.1"/>
    <property type="molecule type" value="Genomic_DNA"/>
</dbReference>
<dbReference type="EMBL" id="CP002686">
    <property type="protein sequence ID" value="AEE79271.1"/>
    <property type="molecule type" value="Genomic_DNA"/>
</dbReference>
<dbReference type="EMBL" id="CP002686">
    <property type="protein sequence ID" value="AEE79272.1"/>
    <property type="molecule type" value="Genomic_DNA"/>
</dbReference>
<dbReference type="EMBL" id="DQ446766">
    <property type="protein sequence ID" value="ABE65504.1"/>
    <property type="molecule type" value="Genomic_DNA"/>
</dbReference>
<dbReference type="PIR" id="T47632">
    <property type="entry name" value="T47632"/>
</dbReference>
<dbReference type="RefSeq" id="NP_001154676.1">
    <molecule id="P0DKG2-2"/>
    <property type="nucleotide sequence ID" value="NM_001161204.2"/>
</dbReference>
<dbReference type="RefSeq" id="NP_191033.1">
    <molecule id="P0DKG2-1"/>
    <property type="nucleotide sequence ID" value="NM_115330.2"/>
</dbReference>
<dbReference type="RefSeq" id="NP_192312.4">
    <molecule id="P0DKG2-2"/>
    <property type="nucleotide sequence ID" value="NM_116641.4"/>
</dbReference>
<dbReference type="BioGRID" id="11028">
    <property type="interactions" value="7"/>
</dbReference>
<dbReference type="IntAct" id="P0DKG2">
    <property type="interactions" value="8"/>
</dbReference>
<dbReference type="STRING" id="3702.P0DKG2"/>
<dbReference type="PaxDb" id="3702-AT3G54730.1"/>
<dbReference type="EnsemblPlants" id="AT3G54730.1">
    <molecule id="P0DKG2-1"/>
    <property type="protein sequence ID" value="AT3G54730.1"/>
    <property type="gene ID" value="AT3G54730"/>
</dbReference>
<dbReference type="EnsemblPlants" id="AT3G54730.2">
    <property type="protein sequence ID" value="AT3G54730.2"/>
    <property type="gene ID" value="AT3G54730"/>
</dbReference>
<dbReference type="EnsemblPlants" id="AT4G04030.1">
    <property type="protein sequence ID" value="AT4G04030.1"/>
    <property type="gene ID" value="AT4G04030"/>
</dbReference>
<dbReference type="GeneID" id="824638"/>
<dbReference type="Gramene" id="AT3G54730.1">
    <molecule id="P0DKG2-1"/>
    <property type="protein sequence ID" value="AT3G54730.1"/>
    <property type="gene ID" value="AT3G54730"/>
</dbReference>
<dbReference type="Gramene" id="AT3G54730.2">
    <property type="protein sequence ID" value="AT3G54730.2"/>
    <property type="gene ID" value="AT3G54730"/>
</dbReference>
<dbReference type="Gramene" id="AT4G04030.1">
    <property type="protein sequence ID" value="AT4G04030.1"/>
    <property type="gene ID" value="AT4G04030"/>
</dbReference>
<dbReference type="KEGG" id="ath:AT3G54730"/>
<dbReference type="KEGG" id="ath:AT4G04030"/>
<dbReference type="Araport" id="AT3G54730"/>
<dbReference type="TAIR" id="AT3G54730"/>
<dbReference type="HOGENOM" id="CLU_759438_0_0_1"/>
<dbReference type="InParanoid" id="P0DKG2"/>
<dbReference type="OMA" id="FFRAFRM"/>
<dbReference type="PRO" id="PR:P0DKG2"/>
<dbReference type="Proteomes" id="UP000006548">
    <property type="component" value="Chromosome 3"/>
</dbReference>
<dbReference type="ExpressionAtlas" id="P0DKG2">
    <property type="expression patterns" value="baseline"/>
</dbReference>
<dbReference type="GO" id="GO:0016020">
    <property type="term" value="C:membrane"/>
    <property type="evidence" value="ECO:0007669"/>
    <property type="project" value="UniProtKB-SubCell"/>
</dbReference>